<keyword id="KW-0067">ATP-binding</keyword>
<keyword id="KW-0436">Ligase</keyword>
<keyword id="KW-0460">Magnesium</keyword>
<keyword id="KW-0464">Manganese</keyword>
<keyword id="KW-0479">Metal-binding</keyword>
<keyword id="KW-0547">Nucleotide-binding</keyword>
<keyword id="KW-0648">Protein biosynthesis</keyword>
<keyword id="KW-1185">Reference proteome</keyword>
<proteinExistence type="inferred from homology"/>
<reference key="1">
    <citation type="journal article" date="2009" name="PLoS Genet.">
        <title>Organised genome dynamics in the Escherichia coli species results in highly diverse adaptive paths.</title>
        <authorList>
            <person name="Touchon M."/>
            <person name="Hoede C."/>
            <person name="Tenaillon O."/>
            <person name="Barbe V."/>
            <person name="Baeriswyl S."/>
            <person name="Bidet P."/>
            <person name="Bingen E."/>
            <person name="Bonacorsi S."/>
            <person name="Bouchier C."/>
            <person name="Bouvet O."/>
            <person name="Calteau A."/>
            <person name="Chiapello H."/>
            <person name="Clermont O."/>
            <person name="Cruveiller S."/>
            <person name="Danchin A."/>
            <person name="Diard M."/>
            <person name="Dossat C."/>
            <person name="Karoui M.E."/>
            <person name="Frapy E."/>
            <person name="Garry L."/>
            <person name="Ghigo J.M."/>
            <person name="Gilles A.M."/>
            <person name="Johnson J."/>
            <person name="Le Bouguenec C."/>
            <person name="Lescat M."/>
            <person name="Mangenot S."/>
            <person name="Martinez-Jehanne V."/>
            <person name="Matic I."/>
            <person name="Nassif X."/>
            <person name="Oztas S."/>
            <person name="Petit M.A."/>
            <person name="Pichon C."/>
            <person name="Rouy Z."/>
            <person name="Ruf C.S."/>
            <person name="Schneider D."/>
            <person name="Tourret J."/>
            <person name="Vacherie B."/>
            <person name="Vallenet D."/>
            <person name="Medigue C."/>
            <person name="Rocha E.P.C."/>
            <person name="Denamur E."/>
        </authorList>
    </citation>
    <scope>NUCLEOTIDE SEQUENCE [LARGE SCALE GENOMIC DNA]</scope>
    <source>
        <strain>55989 / EAEC</strain>
    </source>
</reference>
<organism>
    <name type="scientific">Escherichia coli (strain 55989 / EAEC)</name>
    <dbReference type="NCBI Taxonomy" id="585055"/>
    <lineage>
        <taxon>Bacteria</taxon>
        <taxon>Pseudomonadati</taxon>
        <taxon>Pseudomonadota</taxon>
        <taxon>Gammaproteobacteria</taxon>
        <taxon>Enterobacterales</taxon>
        <taxon>Enterobacteriaceae</taxon>
        <taxon>Escherichia</taxon>
    </lineage>
</organism>
<name>RIMK_ECO55</name>
<sequence>MKIAILSRDGTLYSCKRLREAAIQRGHLVEILDPLSCYMNINPAASSIHYKGRKLPHFDAVIPRIGTAITFYGTAALRQFEMLGSYPLNESVAIARARDKLRSMQLLARQGIDLPVTGIAHSPDDTSDLIDMVGGAPLVVKLVEGTQGIGVVLAETRQAAESVIDAFRGLNAHILVQEYIKEAQGCDIRCLVVGDEVVAAIERRAKEGDFRSNLHRGGAASVASITPQEREIAIKAARTMALDVAGVDILRANRGPLVMEVNASPGLEGIEKTTGIDIAGKMIRWIERHATTEYCLKTGG</sequence>
<comment type="function">
    <text evidence="1">An L-glutamate ligase that catalyzes the ATP-dependent post-translational addition of glutamate residues to the C-terminus of ribosomal protein bS6 (RpsF). Is also able to catalyze the synthesis of poly-alpha-glutamate in vitro, via ATP hydrolysis from unprotected glutamate as substrate. The number of glutamate residues added to either RpsF or to poly-alpha-glutamate changes with pH.</text>
</comment>
<comment type="cofactor">
    <cofactor evidence="1">
        <name>Mg(2+)</name>
        <dbReference type="ChEBI" id="CHEBI:18420"/>
    </cofactor>
    <cofactor evidence="1">
        <name>Mn(2+)</name>
        <dbReference type="ChEBI" id="CHEBI:29035"/>
    </cofactor>
    <text evidence="1">Binds 2 magnesium or manganese ions per subunit.</text>
</comment>
<comment type="similarity">
    <text evidence="1">Belongs to the RimK family.</text>
</comment>
<protein>
    <recommendedName>
        <fullName evidence="1">Ribosomal protein bS6--L-glutamate ligase</fullName>
        <ecNumber evidence="1">6.3.2.-</ecNumber>
    </recommendedName>
    <alternativeName>
        <fullName evidence="1">Poly-alpha-glutamate synthase</fullName>
    </alternativeName>
    <alternativeName>
        <fullName evidence="1">Ribosomal protein bS6 modification protein</fullName>
    </alternativeName>
</protein>
<gene>
    <name evidence="1" type="primary">rimK</name>
    <name type="ordered locus">EC55989_0897</name>
</gene>
<feature type="chain" id="PRO_1000185324" description="Ribosomal protein bS6--L-glutamate ligase">
    <location>
        <begin position="1"/>
        <end position="300"/>
    </location>
</feature>
<feature type="domain" description="ATP-grasp" evidence="1">
    <location>
        <begin position="104"/>
        <end position="287"/>
    </location>
</feature>
<feature type="binding site" evidence="1">
    <location>
        <position position="141"/>
    </location>
    <ligand>
        <name>ATP</name>
        <dbReference type="ChEBI" id="CHEBI:30616"/>
    </ligand>
</feature>
<feature type="binding site" evidence="1">
    <location>
        <begin position="178"/>
        <end position="179"/>
    </location>
    <ligand>
        <name>ATP</name>
        <dbReference type="ChEBI" id="CHEBI:30616"/>
    </ligand>
</feature>
<feature type="binding site" evidence="1">
    <location>
        <position position="187"/>
    </location>
    <ligand>
        <name>ATP</name>
        <dbReference type="ChEBI" id="CHEBI:30616"/>
    </ligand>
</feature>
<feature type="binding site" evidence="1">
    <location>
        <begin position="211"/>
        <end position="213"/>
    </location>
    <ligand>
        <name>ATP</name>
        <dbReference type="ChEBI" id="CHEBI:30616"/>
    </ligand>
</feature>
<feature type="binding site" evidence="1">
    <location>
        <position position="248"/>
    </location>
    <ligand>
        <name>Mg(2+)</name>
        <dbReference type="ChEBI" id="CHEBI:18420"/>
        <label>1</label>
    </ligand>
</feature>
<feature type="binding site" evidence="1">
    <location>
        <position position="248"/>
    </location>
    <ligand>
        <name>Mn(2+)</name>
        <dbReference type="ChEBI" id="CHEBI:29035"/>
        <label>1</label>
    </ligand>
</feature>
<feature type="binding site" evidence="1">
    <location>
        <position position="260"/>
    </location>
    <ligand>
        <name>Mg(2+)</name>
        <dbReference type="ChEBI" id="CHEBI:18420"/>
        <label>1</label>
    </ligand>
</feature>
<feature type="binding site" evidence="1">
    <location>
        <position position="260"/>
    </location>
    <ligand>
        <name>Mg(2+)</name>
        <dbReference type="ChEBI" id="CHEBI:18420"/>
        <label>2</label>
    </ligand>
</feature>
<feature type="binding site" evidence="1">
    <location>
        <position position="260"/>
    </location>
    <ligand>
        <name>Mn(2+)</name>
        <dbReference type="ChEBI" id="CHEBI:29035"/>
        <label>1</label>
    </ligand>
</feature>
<feature type="binding site" evidence="1">
    <location>
        <position position="260"/>
    </location>
    <ligand>
        <name>Mn(2+)</name>
        <dbReference type="ChEBI" id="CHEBI:29035"/>
        <label>2</label>
    </ligand>
</feature>
<feature type="binding site" evidence="1">
    <location>
        <position position="262"/>
    </location>
    <ligand>
        <name>Mg(2+)</name>
        <dbReference type="ChEBI" id="CHEBI:18420"/>
        <label>2</label>
    </ligand>
</feature>
<feature type="binding site" evidence="1">
    <location>
        <position position="262"/>
    </location>
    <ligand>
        <name>Mn(2+)</name>
        <dbReference type="ChEBI" id="CHEBI:29035"/>
        <label>2</label>
    </ligand>
</feature>
<accession>B7LD45</accession>
<dbReference type="EC" id="6.3.2.-" evidence="1"/>
<dbReference type="EMBL" id="CU928145">
    <property type="protein sequence ID" value="CAU96762.1"/>
    <property type="molecule type" value="Genomic_DNA"/>
</dbReference>
<dbReference type="RefSeq" id="WP_000684321.1">
    <property type="nucleotide sequence ID" value="NZ_CP028304.1"/>
</dbReference>
<dbReference type="SMR" id="B7LD45"/>
<dbReference type="GeneID" id="93776570"/>
<dbReference type="KEGG" id="eck:EC55989_0897"/>
<dbReference type="HOGENOM" id="CLU_054353_0_1_6"/>
<dbReference type="Proteomes" id="UP000000746">
    <property type="component" value="Chromosome"/>
</dbReference>
<dbReference type="GO" id="GO:0005737">
    <property type="term" value="C:cytoplasm"/>
    <property type="evidence" value="ECO:0007669"/>
    <property type="project" value="TreeGrafter"/>
</dbReference>
<dbReference type="GO" id="GO:0005524">
    <property type="term" value="F:ATP binding"/>
    <property type="evidence" value="ECO:0007669"/>
    <property type="project" value="UniProtKB-UniRule"/>
</dbReference>
<dbReference type="GO" id="GO:0046872">
    <property type="term" value="F:metal ion binding"/>
    <property type="evidence" value="ECO:0007669"/>
    <property type="project" value="UniProtKB-KW"/>
</dbReference>
<dbReference type="GO" id="GO:0018169">
    <property type="term" value="F:ribosomal S6-glutamic acid ligase activity"/>
    <property type="evidence" value="ECO:0007669"/>
    <property type="project" value="UniProtKB-UniRule"/>
</dbReference>
<dbReference type="GO" id="GO:0036211">
    <property type="term" value="P:protein modification process"/>
    <property type="evidence" value="ECO:0007669"/>
    <property type="project" value="InterPro"/>
</dbReference>
<dbReference type="GO" id="GO:0009432">
    <property type="term" value="P:SOS response"/>
    <property type="evidence" value="ECO:0007669"/>
    <property type="project" value="TreeGrafter"/>
</dbReference>
<dbReference type="GO" id="GO:0006412">
    <property type="term" value="P:translation"/>
    <property type="evidence" value="ECO:0007669"/>
    <property type="project" value="UniProtKB-KW"/>
</dbReference>
<dbReference type="FunFam" id="3.40.50.20:FF:000004">
    <property type="entry name" value="Probable alpha-L-glutamate ligase"/>
    <property type="match status" value="1"/>
</dbReference>
<dbReference type="FunFam" id="3.30.1490.20:FF:000005">
    <property type="entry name" value="Probable alpha-L-glutamate ligase 1"/>
    <property type="match status" value="1"/>
</dbReference>
<dbReference type="FunFam" id="3.30.470.20:FF:000016">
    <property type="entry name" value="Ribosomal protein S6--L-glutamate ligase"/>
    <property type="match status" value="1"/>
</dbReference>
<dbReference type="Gene3D" id="3.40.50.20">
    <property type="match status" value="1"/>
</dbReference>
<dbReference type="Gene3D" id="3.30.1490.20">
    <property type="entry name" value="ATP-grasp fold, A domain"/>
    <property type="match status" value="1"/>
</dbReference>
<dbReference type="Gene3D" id="3.30.470.20">
    <property type="entry name" value="ATP-grasp fold, B domain"/>
    <property type="match status" value="1"/>
</dbReference>
<dbReference type="HAMAP" id="MF_01552">
    <property type="entry name" value="RimK"/>
    <property type="match status" value="1"/>
</dbReference>
<dbReference type="InterPro" id="IPR011761">
    <property type="entry name" value="ATP-grasp"/>
</dbReference>
<dbReference type="InterPro" id="IPR013651">
    <property type="entry name" value="ATP-grasp_RimK-type"/>
</dbReference>
<dbReference type="InterPro" id="IPR013815">
    <property type="entry name" value="ATP_grasp_subdomain_1"/>
</dbReference>
<dbReference type="InterPro" id="IPR023533">
    <property type="entry name" value="RimK"/>
</dbReference>
<dbReference type="InterPro" id="IPR041107">
    <property type="entry name" value="Rimk_N"/>
</dbReference>
<dbReference type="InterPro" id="IPR004666">
    <property type="entry name" value="Rp_bS6_RimK/Lys_biosynth_LsyX"/>
</dbReference>
<dbReference type="NCBIfam" id="NF007764">
    <property type="entry name" value="PRK10446.1"/>
    <property type="match status" value="1"/>
</dbReference>
<dbReference type="NCBIfam" id="TIGR00768">
    <property type="entry name" value="rimK_fam"/>
    <property type="match status" value="1"/>
</dbReference>
<dbReference type="PANTHER" id="PTHR21621:SF7">
    <property type="entry name" value="RIBOSOMAL PROTEIN BS6--L-GLUTAMATE LIGASE"/>
    <property type="match status" value="1"/>
</dbReference>
<dbReference type="PANTHER" id="PTHR21621">
    <property type="entry name" value="RIBOSOMAL PROTEIN S6 MODIFICATION PROTEIN"/>
    <property type="match status" value="1"/>
</dbReference>
<dbReference type="Pfam" id="PF08443">
    <property type="entry name" value="RimK"/>
    <property type="match status" value="1"/>
</dbReference>
<dbReference type="Pfam" id="PF18030">
    <property type="entry name" value="Rimk_N"/>
    <property type="match status" value="1"/>
</dbReference>
<dbReference type="SUPFAM" id="SSF56059">
    <property type="entry name" value="Glutathione synthetase ATP-binding domain-like"/>
    <property type="match status" value="1"/>
</dbReference>
<dbReference type="PROSITE" id="PS50975">
    <property type="entry name" value="ATP_GRASP"/>
    <property type="match status" value="1"/>
</dbReference>
<evidence type="ECO:0000255" key="1">
    <source>
        <dbReference type="HAMAP-Rule" id="MF_01552"/>
    </source>
</evidence>